<organism>
    <name type="scientific">Pogonomyrmex rugosus</name>
    <name type="common">Desert harvester ant</name>
    <dbReference type="NCBI Taxonomy" id="144042"/>
    <lineage>
        <taxon>Eukaryota</taxon>
        <taxon>Metazoa</taxon>
        <taxon>Ecdysozoa</taxon>
        <taxon>Arthropoda</taxon>
        <taxon>Hexapoda</taxon>
        <taxon>Insecta</taxon>
        <taxon>Pterygota</taxon>
        <taxon>Neoptera</taxon>
        <taxon>Endopterygota</taxon>
        <taxon>Hymenoptera</taxon>
        <taxon>Apocrita</taxon>
        <taxon>Aculeata</taxon>
        <taxon>Formicoidea</taxon>
        <taxon>Formicidae</taxon>
        <taxon>Myrmicinae</taxon>
        <taxon>Pogonomyrmex</taxon>
    </lineage>
</organism>
<name>TX4B_POGRU</name>
<evidence type="ECO:0000250" key="1">
    <source>
        <dbReference type="UniProtKB" id="P0DRD4"/>
    </source>
</evidence>
<evidence type="ECO:0000255" key="2"/>
<evidence type="ECO:0000303" key="3">
    <source>
    </source>
</evidence>
<evidence type="ECO:0000305" key="4"/>
<evidence type="ECO:0000305" key="5">
    <source>
    </source>
</evidence>
<sequence>MKAIIFLFAVLTVVAIIIPIISGEPNAGPHAASIDLNEIMKKMGPDLLKMLDDIKTKIQG</sequence>
<keyword id="KW-0027">Amidation</keyword>
<keyword id="KW-0528">Neurotoxin</keyword>
<keyword id="KW-0964">Secreted</keyword>
<keyword id="KW-0732">Signal</keyword>
<keyword id="KW-0800">Toxin</keyword>
<reference key="1">
    <citation type="journal article" date="2024" name="J. Biol. Chem.">
        <title>Peptide toxins that target vertebrate voltage-gated sodium channels underly the painful stings of harvester ants.</title>
        <authorList>
            <person name="Robinson S.D."/>
            <person name="Deuis J.R."/>
            <person name="Niu P."/>
            <person name="Touchard A."/>
            <person name="Mueller A."/>
            <person name="Schendel V."/>
            <person name="Brinkwirth N."/>
            <person name="King G.F."/>
            <person name="Vetter I."/>
            <person name="Schmidt J.O."/>
        </authorList>
    </citation>
    <scope>NUCLEOTIDE SEQUENCE [MRNA]</scope>
    <source>
        <tissue>Venom gland</tissue>
    </source>
</reference>
<feature type="signal peptide" evidence="2">
    <location>
        <begin position="1"/>
        <end position="23"/>
    </location>
</feature>
<feature type="propeptide" id="PRO_0000461259" evidence="5">
    <location>
        <begin position="24"/>
        <end position="33"/>
    </location>
</feature>
<feature type="peptide" id="PRO_0000461260" description="Myrmicitoxin(1)-Pr4b" evidence="1">
    <location>
        <begin position="34"/>
        <end position="59"/>
    </location>
</feature>
<feature type="modified residue" description="Glutamine amide" evidence="1">
    <location>
        <position position="59"/>
    </location>
</feature>
<protein>
    <recommendedName>
        <fullName evidence="3">Myrmicitoxin(1)-Pr4b</fullName>
        <shortName evidence="3">MYRTX(1)-Pr4b</shortName>
    </recommendedName>
</protein>
<proteinExistence type="inferred from homology"/>
<comment type="function">
    <text evidence="1">Toxin that causes a rapid and irreversible paralysis when intrathoracically injected into insects (blowflies). Does not cause spontaneous nocifensive behaviors by intraplantar injection in mice.</text>
</comment>
<comment type="subcellular location">
    <subcellularLocation>
        <location evidence="5">Secreted</location>
    </subcellularLocation>
</comment>
<comment type="tissue specificity">
    <text evidence="5">Expressed by the venom gland.</text>
</comment>
<comment type="similarity">
    <text evidence="4">Belongs to the formicidae venom clade 2 family.</text>
</comment>
<accession>P0DXT9</accession>
<dbReference type="EMBL" id="OR128470">
    <property type="protein sequence ID" value="WMI02508.1"/>
    <property type="molecule type" value="mRNA"/>
</dbReference>
<dbReference type="GO" id="GO:0005576">
    <property type="term" value="C:extracellular region"/>
    <property type="evidence" value="ECO:0007669"/>
    <property type="project" value="UniProtKB-SubCell"/>
</dbReference>
<dbReference type="GO" id="GO:0090729">
    <property type="term" value="F:toxin activity"/>
    <property type="evidence" value="ECO:0007669"/>
    <property type="project" value="UniProtKB-KW"/>
</dbReference>